<feature type="chain" id="PRO_0000223023" description="Uncharacterized protein C-166">
    <location>
        <begin position="1"/>
        <end position="166"/>
    </location>
</feature>
<proteinExistence type="predicted"/>
<reference key="1">
    <citation type="journal article" date="1991" name="Virology">
        <title>Complete nucleotide sequence of the virus SSV1 of the archaebacterium Sulfolobus shibatae.</title>
        <authorList>
            <person name="Palm P."/>
            <person name="Schleper C."/>
            <person name="Grampp B."/>
            <person name="Yeats S."/>
            <person name="McWilliam P."/>
            <person name="Reiter W.-D."/>
            <person name="Zillig W."/>
        </authorList>
    </citation>
    <scope>NUCLEOTIDE SEQUENCE [GENOMIC DNA]</scope>
</reference>
<reference key="2">
    <citation type="journal article" date="1999" name="Genetics">
        <title>Genetic requirements for the function of the archaeal virus SSV1 in Sulfolobus solfataricus: construction and testing of viral shuttle vectors.</title>
        <authorList>
            <person name="Stedman K.M."/>
            <person name="Schleper C."/>
            <person name="Rumpf E."/>
            <person name="Zillig W."/>
        </authorList>
    </citation>
    <scope>FUNCTION</scope>
</reference>
<accession>P20209</accession>
<organism>
    <name type="scientific">Sulfolobus spindle-shape virus 1</name>
    <name type="common">SSV1</name>
    <dbReference type="NCBI Taxonomy" id="244589"/>
    <lineage>
        <taxon>Viruses</taxon>
        <taxon>Viruses incertae sedis</taxon>
        <taxon>Fuselloviridae</taxon>
        <taxon>Alphafusellovirus</taxon>
    </lineage>
</organism>
<dbReference type="EMBL" id="X07234">
    <property type="protein sequence ID" value="CAA30202.1"/>
    <property type="molecule type" value="Genomic_DNA"/>
</dbReference>
<dbReference type="PIR" id="S03234">
    <property type="entry name" value="S03234"/>
</dbReference>
<dbReference type="RefSeq" id="NP_039800.1">
    <property type="nucleotide sequence ID" value="NC_001338.1"/>
</dbReference>
<dbReference type="SMR" id="P20209"/>
<dbReference type="KEGG" id="vg:2559650"/>
<dbReference type="OrthoDB" id="12781at10239"/>
<dbReference type="Proteomes" id="UP000000854">
    <property type="component" value="Genome"/>
</dbReference>
<dbReference type="Pfam" id="PF17615">
    <property type="entry name" value="C166"/>
    <property type="match status" value="1"/>
</dbReference>
<gene>
    <name type="ORF">c166</name>
</gene>
<protein>
    <recommendedName>
        <fullName>Uncharacterized protein C-166</fullName>
    </recommendedName>
</protein>
<name>C166_SSV1</name>
<evidence type="ECO:0000269" key="1">
    <source>
    </source>
</evidence>
<sequence>MGTKLVVYVLLFDVFLSLVVGAYSGIAPPSIPPVPTYASAQLTASLITWTVGWPPITLWPQITLIPPFSILGANFPGLTIPSLTIPGVTLFSISFSWLAPIIYIANWIIWVFQTVASVLSYLLNIFTGSVGLLSSVPVLGPFLTAFVLIVNFVLVWELIKLIRGSE</sequence>
<organismHost>
    <name type="scientific">Saccharolobus solfataricus</name>
    <name type="common">Sulfolobus solfataricus</name>
    <dbReference type="NCBI Taxonomy" id="2287"/>
</organismHost>
<comment type="function">
    <text evidence="1">This protein may be involved in virus assembly. Essential for virus function.</text>
</comment>
<keyword id="KW-1185">Reference proteome</keyword>